<organism>
    <name type="scientific">Cupriavidus necator (strain ATCC 17699 / DSM 428 / KCTC 22496 / NCIMB 10442 / H16 / Stanier 337)</name>
    <name type="common">Ralstonia eutropha</name>
    <dbReference type="NCBI Taxonomy" id="381666"/>
    <lineage>
        <taxon>Bacteria</taxon>
        <taxon>Pseudomonadati</taxon>
        <taxon>Pseudomonadota</taxon>
        <taxon>Betaproteobacteria</taxon>
        <taxon>Burkholderiales</taxon>
        <taxon>Burkholderiaceae</taxon>
        <taxon>Cupriavidus</taxon>
    </lineage>
</organism>
<evidence type="ECO:0000255" key="1">
    <source>
        <dbReference type="HAMAP-Rule" id="MF_00387"/>
    </source>
</evidence>
<name>LPXA_CUPNH</name>
<comment type="function">
    <text evidence="1">Involved in the biosynthesis of lipid A, a phosphorylated glycolipid that anchors the lipopolysaccharide to the outer membrane of the cell.</text>
</comment>
<comment type="catalytic activity">
    <reaction evidence="1">
        <text>a (3R)-hydroxyacyl-[ACP] + UDP-N-acetyl-alpha-D-glucosamine = a UDP-3-O-[(3R)-3-hydroxyacyl]-N-acetyl-alpha-D-glucosamine + holo-[ACP]</text>
        <dbReference type="Rhea" id="RHEA:67812"/>
        <dbReference type="Rhea" id="RHEA-COMP:9685"/>
        <dbReference type="Rhea" id="RHEA-COMP:9945"/>
        <dbReference type="ChEBI" id="CHEBI:57705"/>
        <dbReference type="ChEBI" id="CHEBI:64479"/>
        <dbReference type="ChEBI" id="CHEBI:78827"/>
        <dbReference type="ChEBI" id="CHEBI:173225"/>
        <dbReference type="EC" id="2.3.1.129"/>
    </reaction>
</comment>
<comment type="pathway">
    <text evidence="1">Glycolipid biosynthesis; lipid IV(A) biosynthesis; lipid IV(A) from (3R)-3-hydroxytetradecanoyl-[acyl-carrier-protein] and UDP-N-acetyl-alpha-D-glucosamine: step 1/6.</text>
</comment>
<comment type="subunit">
    <text evidence="1">Homotrimer.</text>
</comment>
<comment type="subcellular location">
    <subcellularLocation>
        <location evidence="1">Cytoplasm</location>
    </subcellularLocation>
</comment>
<comment type="similarity">
    <text evidence="1">Belongs to the transferase hexapeptide repeat family. LpxA subfamily.</text>
</comment>
<keyword id="KW-0012">Acyltransferase</keyword>
<keyword id="KW-0963">Cytoplasm</keyword>
<keyword id="KW-0441">Lipid A biosynthesis</keyword>
<keyword id="KW-0444">Lipid biosynthesis</keyword>
<keyword id="KW-0443">Lipid metabolism</keyword>
<keyword id="KW-1185">Reference proteome</keyword>
<keyword id="KW-0677">Repeat</keyword>
<keyword id="KW-0808">Transferase</keyword>
<feature type="chain" id="PRO_0000302595" description="Acyl-[acyl-carrier-protein]--UDP-N-acetylglucosamine O-acyltransferase">
    <location>
        <begin position="1"/>
        <end position="267"/>
    </location>
</feature>
<reference key="1">
    <citation type="journal article" date="2006" name="Nat. Biotechnol.">
        <title>Genome sequence of the bioplastic-producing 'Knallgas' bacterium Ralstonia eutropha H16.</title>
        <authorList>
            <person name="Pohlmann A."/>
            <person name="Fricke W.F."/>
            <person name="Reinecke F."/>
            <person name="Kusian B."/>
            <person name="Liesegang H."/>
            <person name="Cramm R."/>
            <person name="Eitinger T."/>
            <person name="Ewering C."/>
            <person name="Poetter M."/>
            <person name="Schwartz E."/>
            <person name="Strittmatter A."/>
            <person name="Voss I."/>
            <person name="Gottschalk G."/>
            <person name="Steinbuechel A."/>
            <person name="Friedrich B."/>
            <person name="Bowien B."/>
        </authorList>
    </citation>
    <scope>NUCLEOTIDE SEQUENCE [LARGE SCALE GENOMIC DNA]</scope>
    <source>
        <strain>ATCC 17699 / DSM 428 / KCTC 22496 / NCIMB 10442 / H16 / Stanier 337</strain>
    </source>
</reference>
<gene>
    <name evidence="1" type="primary">lpxA</name>
    <name type="ordered locus">H16_A2043</name>
</gene>
<proteinExistence type="inferred from homology"/>
<accession>Q0KA28</accession>
<sequence>MTQIHPTALVDPKAELASDVTVGPFSIVGPNVRIGSGTRVGSHTTVEGYTTIGEGNTIGPYASVGGVPQDMKYRNEPTRLEIGDRNTIREFTTIHTGTVQDRGLTSLGNDNWIMAYVHIAHDCTVGNHTVFSSNAQIAGHVEVGDWAILGGMSGVHQFVRIGAHAMLGGASALVQDVPPFVIAASDKSGNKATPHGVNVEGLRRRGFDAGQIAALRQAYKLLYKSDLSFDEARNEITALLGQSDAGTAAPLRAFVDFLAATQRGIVR</sequence>
<dbReference type="EC" id="2.3.1.129" evidence="1"/>
<dbReference type="EMBL" id="AM260479">
    <property type="protein sequence ID" value="CAJ93143.1"/>
    <property type="molecule type" value="Genomic_DNA"/>
</dbReference>
<dbReference type="RefSeq" id="WP_010809589.1">
    <property type="nucleotide sequence ID" value="NZ_CP039287.1"/>
</dbReference>
<dbReference type="SMR" id="Q0KA28"/>
<dbReference type="STRING" id="381666.H16_A2043"/>
<dbReference type="KEGG" id="reh:H16_A2043"/>
<dbReference type="eggNOG" id="COG1043">
    <property type="taxonomic scope" value="Bacteria"/>
</dbReference>
<dbReference type="HOGENOM" id="CLU_061249_0_0_4"/>
<dbReference type="OrthoDB" id="9807278at2"/>
<dbReference type="UniPathway" id="UPA00359">
    <property type="reaction ID" value="UER00477"/>
</dbReference>
<dbReference type="Proteomes" id="UP000008210">
    <property type="component" value="Chromosome 1"/>
</dbReference>
<dbReference type="GO" id="GO:0005737">
    <property type="term" value="C:cytoplasm"/>
    <property type="evidence" value="ECO:0007669"/>
    <property type="project" value="UniProtKB-SubCell"/>
</dbReference>
<dbReference type="GO" id="GO:0016020">
    <property type="term" value="C:membrane"/>
    <property type="evidence" value="ECO:0007669"/>
    <property type="project" value="GOC"/>
</dbReference>
<dbReference type="GO" id="GO:0008780">
    <property type="term" value="F:acyl-[acyl-carrier-protein]-UDP-N-acetylglucosamine O-acyltransferase activity"/>
    <property type="evidence" value="ECO:0007669"/>
    <property type="project" value="UniProtKB-UniRule"/>
</dbReference>
<dbReference type="GO" id="GO:0009245">
    <property type="term" value="P:lipid A biosynthetic process"/>
    <property type="evidence" value="ECO:0007669"/>
    <property type="project" value="UniProtKB-UniRule"/>
</dbReference>
<dbReference type="CDD" id="cd03351">
    <property type="entry name" value="LbH_UDP-GlcNAc_AT"/>
    <property type="match status" value="1"/>
</dbReference>
<dbReference type="Gene3D" id="2.160.10.10">
    <property type="entry name" value="Hexapeptide repeat proteins"/>
    <property type="match status" value="1"/>
</dbReference>
<dbReference type="Gene3D" id="1.20.1180.10">
    <property type="entry name" value="Udp N-acetylglucosamine O-acyltransferase, C-terminal domain"/>
    <property type="match status" value="1"/>
</dbReference>
<dbReference type="HAMAP" id="MF_00387">
    <property type="entry name" value="LpxA"/>
    <property type="match status" value="1"/>
</dbReference>
<dbReference type="InterPro" id="IPR029098">
    <property type="entry name" value="Acetyltransf_C"/>
</dbReference>
<dbReference type="InterPro" id="IPR037157">
    <property type="entry name" value="Acetyltransf_C_sf"/>
</dbReference>
<dbReference type="InterPro" id="IPR001451">
    <property type="entry name" value="Hexapep"/>
</dbReference>
<dbReference type="InterPro" id="IPR018357">
    <property type="entry name" value="Hexapep_transf_CS"/>
</dbReference>
<dbReference type="InterPro" id="IPR010137">
    <property type="entry name" value="Lipid_A_LpxA"/>
</dbReference>
<dbReference type="InterPro" id="IPR011004">
    <property type="entry name" value="Trimer_LpxA-like_sf"/>
</dbReference>
<dbReference type="NCBIfam" id="TIGR01852">
    <property type="entry name" value="lipid_A_lpxA"/>
    <property type="match status" value="1"/>
</dbReference>
<dbReference type="NCBIfam" id="NF003657">
    <property type="entry name" value="PRK05289.1"/>
    <property type="match status" value="1"/>
</dbReference>
<dbReference type="PANTHER" id="PTHR43480">
    <property type="entry name" value="ACYL-[ACYL-CARRIER-PROTEIN]--UDP-N-ACETYLGLUCOSAMINE O-ACYLTRANSFERASE"/>
    <property type="match status" value="1"/>
</dbReference>
<dbReference type="PANTHER" id="PTHR43480:SF1">
    <property type="entry name" value="ACYL-[ACYL-CARRIER-PROTEIN]--UDP-N-ACETYLGLUCOSAMINE O-ACYLTRANSFERASE, MITOCHONDRIAL-RELATED"/>
    <property type="match status" value="1"/>
</dbReference>
<dbReference type="Pfam" id="PF13720">
    <property type="entry name" value="Acetyltransf_11"/>
    <property type="match status" value="1"/>
</dbReference>
<dbReference type="Pfam" id="PF00132">
    <property type="entry name" value="Hexapep"/>
    <property type="match status" value="2"/>
</dbReference>
<dbReference type="PIRSF" id="PIRSF000456">
    <property type="entry name" value="UDP-GlcNAc_acltr"/>
    <property type="match status" value="1"/>
</dbReference>
<dbReference type="SUPFAM" id="SSF51161">
    <property type="entry name" value="Trimeric LpxA-like enzymes"/>
    <property type="match status" value="1"/>
</dbReference>
<dbReference type="PROSITE" id="PS00101">
    <property type="entry name" value="HEXAPEP_TRANSFERASES"/>
    <property type="match status" value="1"/>
</dbReference>
<protein>
    <recommendedName>
        <fullName evidence="1">Acyl-[acyl-carrier-protein]--UDP-N-acetylglucosamine O-acyltransferase</fullName>
        <shortName evidence="1">UDP-N-acetylglucosamine acyltransferase</shortName>
        <ecNumber evidence="1">2.3.1.129</ecNumber>
    </recommendedName>
</protein>